<comment type="function">
    <text evidence="1">Condensation of UDP-2,3-diacylglucosamine and 2,3-diacylglucosamine-1-phosphate to form lipid A disaccharide, a precursor of lipid A, a phosphorylated glycolipid that anchors the lipopolysaccharide to the outer membrane of the cell.</text>
</comment>
<comment type="catalytic activity">
    <reaction evidence="1">
        <text>2-N,3-O-bis[(3R)-3-hydroxytetradecanoyl]-alpha-D-glucosaminyl 1-phosphate + UDP-2-N,3-O-bis[(3R)-3-hydroxytetradecanoyl]-alpha-D-glucosamine = lipid A disaccharide (E. coli) + UDP + H(+)</text>
        <dbReference type="Rhea" id="RHEA:22668"/>
        <dbReference type="ChEBI" id="CHEBI:15378"/>
        <dbReference type="ChEBI" id="CHEBI:57957"/>
        <dbReference type="ChEBI" id="CHEBI:58223"/>
        <dbReference type="ChEBI" id="CHEBI:58466"/>
        <dbReference type="ChEBI" id="CHEBI:78847"/>
    </reaction>
</comment>
<comment type="catalytic activity">
    <reaction evidence="1">
        <text>a lipid X + a UDP-2-N,3-O-bis[(3R)-3-hydroxyacyl]-alpha-D-glucosamine = a lipid A disaccharide + UDP + H(+)</text>
        <dbReference type="Rhea" id="RHEA:67828"/>
        <dbReference type="ChEBI" id="CHEBI:15378"/>
        <dbReference type="ChEBI" id="CHEBI:58223"/>
        <dbReference type="ChEBI" id="CHEBI:137748"/>
        <dbReference type="ChEBI" id="CHEBI:176338"/>
        <dbReference type="ChEBI" id="CHEBI:176343"/>
        <dbReference type="EC" id="2.4.1.182"/>
    </reaction>
</comment>
<comment type="pathway">
    <text evidence="1">Glycolipid biosynthesis; lipid IV(A) biosynthesis; lipid IV(A) from (3R)-3-hydroxytetradecanoyl-[acyl-carrier-protein] and UDP-N-acetyl-alpha-D-glucosamine: step 5/6.</text>
</comment>
<comment type="similarity">
    <text evidence="1">Belongs to the LpxB family.</text>
</comment>
<gene>
    <name evidence="1" type="primary">lpxB</name>
    <name type="ordered locus">EcE24377A_0186</name>
</gene>
<evidence type="ECO:0000255" key="1">
    <source>
        <dbReference type="HAMAP-Rule" id="MF_00392"/>
    </source>
</evidence>
<proteinExistence type="inferred from homology"/>
<keyword id="KW-0328">Glycosyltransferase</keyword>
<keyword id="KW-0441">Lipid A biosynthesis</keyword>
<keyword id="KW-0444">Lipid biosynthesis</keyword>
<keyword id="KW-0443">Lipid metabolism</keyword>
<keyword id="KW-1185">Reference proteome</keyword>
<keyword id="KW-0808">Transferase</keyword>
<accession>A7ZHS2</accession>
<sequence>MTEQRPLTIALVAGETSGDILGAGLIRALKEHVPNARFVGVAGPRMQAEGCEAWYEMEELAVMGIVEVLGRLRRLLHIRADLTKRFGELKPDVFVGIDAPDFNITLEGNLKKQGIKTIHYVSPSVWAWRQKRVFKIGRATDLVLAFLPFEKAFYDKYNVPCRFIGHTMADAMPLDPDKNAARDVLGIPHDAHCLALLPGSRGAEVEMLSADFLKTAQLLRQTYPDLEIVVPLVNAKRREQFERIKAEVAPDLSVHLLDGMGREAMVASDAALLASGTAALECMLAKCPMVVGYRMKPFTFWLAKRLVKTDYVSLPNLLAGRELVKELLQEECEPQKLAAALLPLLANGKTSHAMHDTFRELHQQIRCNADEQAAQAVLELAQ</sequence>
<reference key="1">
    <citation type="journal article" date="2008" name="J. Bacteriol.">
        <title>The pangenome structure of Escherichia coli: comparative genomic analysis of E. coli commensal and pathogenic isolates.</title>
        <authorList>
            <person name="Rasko D.A."/>
            <person name="Rosovitz M.J."/>
            <person name="Myers G.S.A."/>
            <person name="Mongodin E.F."/>
            <person name="Fricke W.F."/>
            <person name="Gajer P."/>
            <person name="Crabtree J."/>
            <person name="Sebaihia M."/>
            <person name="Thomson N.R."/>
            <person name="Chaudhuri R."/>
            <person name="Henderson I.R."/>
            <person name="Sperandio V."/>
            <person name="Ravel J."/>
        </authorList>
    </citation>
    <scope>NUCLEOTIDE SEQUENCE [LARGE SCALE GENOMIC DNA]</scope>
    <source>
        <strain>E24377A / ETEC</strain>
    </source>
</reference>
<name>LPXB_ECO24</name>
<protein>
    <recommendedName>
        <fullName evidence="1">Lipid-A-disaccharide synthase</fullName>
        <ecNumber evidence="1">2.4.1.182</ecNumber>
    </recommendedName>
</protein>
<organism>
    <name type="scientific">Escherichia coli O139:H28 (strain E24377A / ETEC)</name>
    <dbReference type="NCBI Taxonomy" id="331111"/>
    <lineage>
        <taxon>Bacteria</taxon>
        <taxon>Pseudomonadati</taxon>
        <taxon>Pseudomonadota</taxon>
        <taxon>Gammaproteobacteria</taxon>
        <taxon>Enterobacterales</taxon>
        <taxon>Enterobacteriaceae</taxon>
        <taxon>Escherichia</taxon>
    </lineage>
</organism>
<feature type="chain" id="PRO_1000060769" description="Lipid-A-disaccharide synthase">
    <location>
        <begin position="1"/>
        <end position="382"/>
    </location>
</feature>
<dbReference type="EC" id="2.4.1.182" evidence="1"/>
<dbReference type="EMBL" id="CP000800">
    <property type="protein sequence ID" value="ABV19797.1"/>
    <property type="molecule type" value="Genomic_DNA"/>
</dbReference>
<dbReference type="RefSeq" id="WP_000139654.1">
    <property type="nucleotide sequence ID" value="NC_009801.1"/>
</dbReference>
<dbReference type="SMR" id="A7ZHS2"/>
<dbReference type="CAZy" id="GT19">
    <property type="family name" value="Glycosyltransferase Family 19"/>
</dbReference>
<dbReference type="GeneID" id="93777243"/>
<dbReference type="KEGG" id="ecw:EcE24377A_0186"/>
<dbReference type="HOGENOM" id="CLU_036577_3_0_6"/>
<dbReference type="UniPathway" id="UPA00359">
    <property type="reaction ID" value="UER00481"/>
</dbReference>
<dbReference type="Proteomes" id="UP000001122">
    <property type="component" value="Chromosome"/>
</dbReference>
<dbReference type="GO" id="GO:0016020">
    <property type="term" value="C:membrane"/>
    <property type="evidence" value="ECO:0007669"/>
    <property type="project" value="GOC"/>
</dbReference>
<dbReference type="GO" id="GO:0008915">
    <property type="term" value="F:lipid-A-disaccharide synthase activity"/>
    <property type="evidence" value="ECO:0007669"/>
    <property type="project" value="UniProtKB-UniRule"/>
</dbReference>
<dbReference type="GO" id="GO:0005543">
    <property type="term" value="F:phospholipid binding"/>
    <property type="evidence" value="ECO:0007669"/>
    <property type="project" value="TreeGrafter"/>
</dbReference>
<dbReference type="GO" id="GO:0009245">
    <property type="term" value="P:lipid A biosynthetic process"/>
    <property type="evidence" value="ECO:0007669"/>
    <property type="project" value="UniProtKB-UniRule"/>
</dbReference>
<dbReference type="CDD" id="cd01635">
    <property type="entry name" value="Glycosyltransferase_GTB-type"/>
    <property type="match status" value="1"/>
</dbReference>
<dbReference type="HAMAP" id="MF_00392">
    <property type="entry name" value="LpxB"/>
    <property type="match status" value="1"/>
</dbReference>
<dbReference type="InterPro" id="IPR003835">
    <property type="entry name" value="Glyco_trans_19"/>
</dbReference>
<dbReference type="NCBIfam" id="TIGR00215">
    <property type="entry name" value="lpxB"/>
    <property type="match status" value="1"/>
</dbReference>
<dbReference type="PANTHER" id="PTHR30372">
    <property type="entry name" value="LIPID-A-DISACCHARIDE SYNTHASE"/>
    <property type="match status" value="1"/>
</dbReference>
<dbReference type="PANTHER" id="PTHR30372:SF4">
    <property type="entry name" value="LIPID-A-DISACCHARIDE SYNTHASE, MITOCHONDRIAL-RELATED"/>
    <property type="match status" value="1"/>
</dbReference>
<dbReference type="Pfam" id="PF02684">
    <property type="entry name" value="LpxB"/>
    <property type="match status" value="1"/>
</dbReference>
<dbReference type="SUPFAM" id="SSF53756">
    <property type="entry name" value="UDP-Glycosyltransferase/glycogen phosphorylase"/>
    <property type="match status" value="1"/>
</dbReference>